<name>KUP_CAUVC</name>
<sequence>MASEAPHASAPDCAPASSDIPQQDGGSTNGHGHDLKGHGFFALALGSVGVVFGDIGTSPLYAFKEALAAASHDGVTRSEIFGVVSLALWALILIVTIKYVVFIMRADNKGEGGVLSLMALAQHAMGKRTTLVFVLGVAGAALFYGDAVITPAMSVLSAVEGLRTIPALEHGVTNEVVLLIATVMLLGLFFIQSRGTASVGKLFGPVCAVWFGVMFSLGLMNLAANPGILMAISPYYAVEFLAEHGLTGFIVLGAVFLTVTGVEALTADMGHFGRWPIQAAWLFFVLPCLAMNYLGQGAFALTTLETAQAAGKAMPELNWFFEMAPEALRLPLVLLAGAATVIASQAVITGAFSLTQQAIQLGLLPRLDVRRTSETQSGQIFVPQLNTMLLLGVLAIMFTFQTSSALAHAYGLAVTGTMIVTTCMAFIVMRKLWKWSMPMALLFLVPFLALDITFLSANALRFFSGGWLPVLIGAALFTIMATWVRGSQILTDKTRRDSLPVADLMDILRARAPHRAPGTAIFLTSDPDMTPVALMHNLKHNKVLHERNVILTVRTAETPRVSEEERVKIEKVNDDFKKVVVNYGFMESPNIPKALAVCRKQGLKFDIMATSFFLGRRSIVPSANSGMPLWQDRLFIYLMRNAANPTDFFKIPPGRVVELGAQVTV</sequence>
<feature type="chain" id="PRO_0000209006" description="Probable potassium transport system protein Kup">
    <location>
        <begin position="1"/>
        <end position="665"/>
    </location>
</feature>
<feature type="transmembrane region" description="Helical" evidence="1">
    <location>
        <begin position="40"/>
        <end position="60"/>
    </location>
</feature>
<feature type="transmembrane region" description="Helical" evidence="1">
    <location>
        <begin position="83"/>
        <end position="103"/>
    </location>
</feature>
<feature type="transmembrane region" description="Helical" evidence="1">
    <location>
        <begin position="131"/>
        <end position="151"/>
    </location>
</feature>
<feature type="transmembrane region" description="Helical" evidence="1">
    <location>
        <begin position="171"/>
        <end position="191"/>
    </location>
</feature>
<feature type="transmembrane region" description="Helical" evidence="1">
    <location>
        <begin position="202"/>
        <end position="222"/>
    </location>
</feature>
<feature type="transmembrane region" description="Helical" evidence="1">
    <location>
        <begin position="245"/>
        <end position="265"/>
    </location>
</feature>
<feature type="transmembrane region" description="Helical" evidence="1">
    <location>
        <begin position="281"/>
        <end position="301"/>
    </location>
</feature>
<feature type="transmembrane region" description="Helical" evidence="1">
    <location>
        <begin position="332"/>
        <end position="352"/>
    </location>
</feature>
<feature type="transmembrane region" description="Helical" evidence="1">
    <location>
        <begin position="380"/>
        <end position="400"/>
    </location>
</feature>
<feature type="transmembrane region" description="Helical" evidence="1">
    <location>
        <begin position="409"/>
        <end position="429"/>
    </location>
</feature>
<feature type="transmembrane region" description="Helical" evidence="1">
    <location>
        <begin position="435"/>
        <end position="455"/>
    </location>
</feature>
<feature type="transmembrane region" description="Helical" evidence="1">
    <location>
        <begin position="462"/>
        <end position="482"/>
    </location>
</feature>
<feature type="region of interest" description="Disordered" evidence="2">
    <location>
        <begin position="1"/>
        <end position="31"/>
    </location>
</feature>
<feature type="compositionally biased region" description="Low complexity" evidence="2">
    <location>
        <begin position="1"/>
        <end position="18"/>
    </location>
</feature>
<keyword id="KW-0997">Cell inner membrane</keyword>
<keyword id="KW-1003">Cell membrane</keyword>
<keyword id="KW-0406">Ion transport</keyword>
<keyword id="KW-0472">Membrane</keyword>
<keyword id="KW-0630">Potassium</keyword>
<keyword id="KW-0633">Potassium transport</keyword>
<keyword id="KW-1185">Reference proteome</keyword>
<keyword id="KW-0769">Symport</keyword>
<keyword id="KW-0812">Transmembrane</keyword>
<keyword id="KW-1133">Transmembrane helix</keyword>
<keyword id="KW-0813">Transport</keyword>
<reference key="1">
    <citation type="journal article" date="2001" name="Proc. Natl. Acad. Sci. U.S.A.">
        <title>Complete genome sequence of Caulobacter crescentus.</title>
        <authorList>
            <person name="Nierman W.C."/>
            <person name="Feldblyum T.V."/>
            <person name="Laub M.T."/>
            <person name="Paulsen I.T."/>
            <person name="Nelson K.E."/>
            <person name="Eisen J.A."/>
            <person name="Heidelberg J.F."/>
            <person name="Alley M.R.K."/>
            <person name="Ohta N."/>
            <person name="Maddock J.R."/>
            <person name="Potocka I."/>
            <person name="Nelson W.C."/>
            <person name="Newton A."/>
            <person name="Stephens C."/>
            <person name="Phadke N.D."/>
            <person name="Ely B."/>
            <person name="DeBoy R.T."/>
            <person name="Dodson R.J."/>
            <person name="Durkin A.S."/>
            <person name="Gwinn M.L."/>
            <person name="Haft D.H."/>
            <person name="Kolonay J.F."/>
            <person name="Smit J."/>
            <person name="Craven M.B."/>
            <person name="Khouri H.M."/>
            <person name="Shetty J."/>
            <person name="Berry K.J."/>
            <person name="Utterback T.R."/>
            <person name="Tran K."/>
            <person name="Wolf A.M."/>
            <person name="Vamathevan J.J."/>
            <person name="Ermolaeva M.D."/>
            <person name="White O."/>
            <person name="Salzberg S.L."/>
            <person name="Venter J.C."/>
            <person name="Shapiro L."/>
            <person name="Fraser C.M."/>
        </authorList>
    </citation>
    <scope>NUCLEOTIDE SEQUENCE [LARGE SCALE GENOMIC DNA]</scope>
    <source>
        <strain>ATCC 19089 / CIP 103742 / CB 15</strain>
    </source>
</reference>
<organism>
    <name type="scientific">Caulobacter vibrioides (strain ATCC 19089 / CIP 103742 / CB 15)</name>
    <name type="common">Caulobacter crescentus</name>
    <dbReference type="NCBI Taxonomy" id="190650"/>
    <lineage>
        <taxon>Bacteria</taxon>
        <taxon>Pseudomonadati</taxon>
        <taxon>Pseudomonadota</taxon>
        <taxon>Alphaproteobacteria</taxon>
        <taxon>Caulobacterales</taxon>
        <taxon>Caulobacteraceae</taxon>
        <taxon>Caulobacter</taxon>
    </lineage>
</organism>
<proteinExistence type="inferred from homology"/>
<comment type="function">
    <text evidence="1">Transport of potassium into the cell. Likely operates as a K(+):H(+) symporter.</text>
</comment>
<comment type="catalytic activity">
    <reaction evidence="1">
        <text>K(+)(in) + H(+)(in) = K(+)(out) + H(+)(out)</text>
        <dbReference type="Rhea" id="RHEA:28490"/>
        <dbReference type="ChEBI" id="CHEBI:15378"/>
        <dbReference type="ChEBI" id="CHEBI:29103"/>
    </reaction>
    <physiologicalReaction direction="right-to-left" evidence="1">
        <dbReference type="Rhea" id="RHEA:28492"/>
    </physiologicalReaction>
</comment>
<comment type="subcellular location">
    <subcellularLocation>
        <location evidence="1">Cell inner membrane</location>
        <topology evidence="1">Multi-pass membrane protein</topology>
    </subcellularLocation>
</comment>
<comment type="similarity">
    <text evidence="1">Belongs to the HAK/KUP transporter (TC 2.A.72) family.</text>
</comment>
<comment type="sequence caution" evidence="3">
    <conflict type="erroneous initiation">
        <sequence resource="EMBL-CDS" id="AAK22118"/>
    </conflict>
</comment>
<accession>Q9ABT9</accession>
<dbReference type="EMBL" id="AE005673">
    <property type="protein sequence ID" value="AAK22118.1"/>
    <property type="status" value="ALT_INIT"/>
    <property type="molecule type" value="Genomic_DNA"/>
</dbReference>
<dbReference type="PIR" id="B87265">
    <property type="entry name" value="B87265"/>
</dbReference>
<dbReference type="RefSeq" id="NP_418950.1">
    <property type="nucleotide sequence ID" value="NC_002696.2"/>
</dbReference>
<dbReference type="RefSeq" id="WP_012639885.1">
    <property type="nucleotide sequence ID" value="NC_002696.2"/>
</dbReference>
<dbReference type="STRING" id="190650.CC_0131"/>
<dbReference type="EnsemblBacteria" id="AAK22118">
    <property type="protein sequence ID" value="AAK22118"/>
    <property type="gene ID" value="CC_0131"/>
</dbReference>
<dbReference type="KEGG" id="ccr:CC_0131"/>
<dbReference type="PATRIC" id="fig|190650.5.peg.128"/>
<dbReference type="eggNOG" id="COG3158">
    <property type="taxonomic scope" value="Bacteria"/>
</dbReference>
<dbReference type="HOGENOM" id="CLU_008142_4_2_5"/>
<dbReference type="Proteomes" id="UP000001816">
    <property type="component" value="Chromosome"/>
</dbReference>
<dbReference type="GO" id="GO:0005886">
    <property type="term" value="C:plasma membrane"/>
    <property type="evidence" value="ECO:0007669"/>
    <property type="project" value="UniProtKB-SubCell"/>
</dbReference>
<dbReference type="GO" id="GO:0015079">
    <property type="term" value="F:potassium ion transmembrane transporter activity"/>
    <property type="evidence" value="ECO:0007669"/>
    <property type="project" value="UniProtKB-UniRule"/>
</dbReference>
<dbReference type="GO" id="GO:0015293">
    <property type="term" value="F:symporter activity"/>
    <property type="evidence" value="ECO:0007669"/>
    <property type="project" value="UniProtKB-UniRule"/>
</dbReference>
<dbReference type="HAMAP" id="MF_01522">
    <property type="entry name" value="Kup"/>
    <property type="match status" value="1"/>
</dbReference>
<dbReference type="InterPro" id="IPR003855">
    <property type="entry name" value="K+_transporter"/>
</dbReference>
<dbReference type="InterPro" id="IPR053952">
    <property type="entry name" value="K_trans_C"/>
</dbReference>
<dbReference type="InterPro" id="IPR053951">
    <property type="entry name" value="K_trans_N"/>
</dbReference>
<dbReference type="InterPro" id="IPR023051">
    <property type="entry name" value="Kup"/>
</dbReference>
<dbReference type="PANTHER" id="PTHR30540:SF79">
    <property type="entry name" value="LOW AFFINITY POTASSIUM TRANSPORT SYSTEM PROTEIN KUP"/>
    <property type="match status" value="1"/>
</dbReference>
<dbReference type="PANTHER" id="PTHR30540">
    <property type="entry name" value="OSMOTIC STRESS POTASSIUM TRANSPORTER"/>
    <property type="match status" value="1"/>
</dbReference>
<dbReference type="Pfam" id="PF02705">
    <property type="entry name" value="K_trans"/>
    <property type="match status" value="1"/>
</dbReference>
<dbReference type="Pfam" id="PF22776">
    <property type="entry name" value="K_trans_C"/>
    <property type="match status" value="1"/>
</dbReference>
<evidence type="ECO:0000255" key="1">
    <source>
        <dbReference type="HAMAP-Rule" id="MF_01522"/>
    </source>
</evidence>
<evidence type="ECO:0000256" key="2">
    <source>
        <dbReference type="SAM" id="MobiDB-lite"/>
    </source>
</evidence>
<evidence type="ECO:0000305" key="3"/>
<gene>
    <name evidence="1" type="primary">kup</name>
    <name type="ordered locus">CC_0131</name>
</gene>
<protein>
    <recommendedName>
        <fullName evidence="1">Probable potassium transport system protein Kup</fullName>
    </recommendedName>
</protein>